<organism>
    <name type="scientific">Burkholderia pseudomallei (strain K96243)</name>
    <dbReference type="NCBI Taxonomy" id="272560"/>
    <lineage>
        <taxon>Bacteria</taxon>
        <taxon>Pseudomonadati</taxon>
        <taxon>Pseudomonadota</taxon>
        <taxon>Betaproteobacteria</taxon>
        <taxon>Burkholderiales</taxon>
        <taxon>Burkholderiaceae</taxon>
        <taxon>Burkholderia</taxon>
        <taxon>pseudomallei group</taxon>
    </lineage>
</organism>
<sequence length="108" mass="11785">MMKGQLAGLMKQAQQMQENMKKMQEQLALIEVEGQSGAGLVKVTMTCRNEVRRVAIDPSLLADDKDMLEDLVAAAFNDAVRKAEATSQEKMSGMTSGLPLPPGFKLPF</sequence>
<reference key="1">
    <citation type="journal article" date="2004" name="Proc. Natl. Acad. Sci. U.S.A.">
        <title>Genomic plasticity of the causative agent of melioidosis, Burkholderia pseudomallei.</title>
        <authorList>
            <person name="Holden M.T.G."/>
            <person name="Titball R.W."/>
            <person name="Peacock S.J."/>
            <person name="Cerdeno-Tarraga A.-M."/>
            <person name="Atkins T."/>
            <person name="Crossman L.C."/>
            <person name="Pitt T."/>
            <person name="Churcher C."/>
            <person name="Mungall K.L."/>
            <person name="Bentley S.D."/>
            <person name="Sebaihia M."/>
            <person name="Thomson N.R."/>
            <person name="Bason N."/>
            <person name="Beacham I.R."/>
            <person name="Brooks K."/>
            <person name="Brown K.A."/>
            <person name="Brown N.F."/>
            <person name="Challis G.L."/>
            <person name="Cherevach I."/>
            <person name="Chillingworth T."/>
            <person name="Cronin A."/>
            <person name="Crossett B."/>
            <person name="Davis P."/>
            <person name="DeShazer D."/>
            <person name="Feltwell T."/>
            <person name="Fraser A."/>
            <person name="Hance Z."/>
            <person name="Hauser H."/>
            <person name="Holroyd S."/>
            <person name="Jagels K."/>
            <person name="Keith K.E."/>
            <person name="Maddison M."/>
            <person name="Moule S."/>
            <person name="Price C."/>
            <person name="Quail M.A."/>
            <person name="Rabbinowitsch E."/>
            <person name="Rutherford K."/>
            <person name="Sanders M."/>
            <person name="Simmonds M."/>
            <person name="Songsivilai S."/>
            <person name="Stevens K."/>
            <person name="Tumapa S."/>
            <person name="Vesaratchavest M."/>
            <person name="Whitehead S."/>
            <person name="Yeats C."/>
            <person name="Barrell B.G."/>
            <person name="Oyston P.C.F."/>
            <person name="Parkhill J."/>
        </authorList>
    </citation>
    <scope>NUCLEOTIDE SEQUENCE [LARGE SCALE GENOMIC DNA]</scope>
    <source>
        <strain>K96243</strain>
    </source>
</reference>
<feature type="chain" id="PRO_1000003709" description="Nucleoid-associated protein BPSL1499">
    <location>
        <begin position="1"/>
        <end position="108"/>
    </location>
</feature>
<feature type="region of interest" description="Disordered" evidence="2">
    <location>
        <begin position="84"/>
        <end position="108"/>
    </location>
</feature>
<feature type="compositionally biased region" description="Polar residues" evidence="2">
    <location>
        <begin position="85"/>
        <end position="95"/>
    </location>
</feature>
<feature type="compositionally biased region" description="Pro residues" evidence="2">
    <location>
        <begin position="99"/>
        <end position="108"/>
    </location>
</feature>
<dbReference type="EMBL" id="BX571965">
    <property type="protein sequence ID" value="CAH35500.1"/>
    <property type="molecule type" value="Genomic_DNA"/>
</dbReference>
<dbReference type="RefSeq" id="WP_004192342.1">
    <property type="nucleotide sequence ID" value="NZ_CP009538.1"/>
</dbReference>
<dbReference type="RefSeq" id="YP_108119.1">
    <property type="nucleotide sequence ID" value="NC_006350.1"/>
</dbReference>
<dbReference type="SMR" id="Q63UU7"/>
<dbReference type="STRING" id="272560.BPSL1499"/>
<dbReference type="KEGG" id="bps:BPSL1499"/>
<dbReference type="PATRIC" id="fig|272560.51.peg.3535"/>
<dbReference type="eggNOG" id="COG0718">
    <property type="taxonomic scope" value="Bacteria"/>
</dbReference>
<dbReference type="Proteomes" id="UP000000605">
    <property type="component" value="Chromosome 1"/>
</dbReference>
<dbReference type="GO" id="GO:0043590">
    <property type="term" value="C:bacterial nucleoid"/>
    <property type="evidence" value="ECO:0007669"/>
    <property type="project" value="UniProtKB-UniRule"/>
</dbReference>
<dbReference type="GO" id="GO:0005829">
    <property type="term" value="C:cytosol"/>
    <property type="evidence" value="ECO:0007669"/>
    <property type="project" value="TreeGrafter"/>
</dbReference>
<dbReference type="GO" id="GO:0003677">
    <property type="term" value="F:DNA binding"/>
    <property type="evidence" value="ECO:0007669"/>
    <property type="project" value="UniProtKB-UniRule"/>
</dbReference>
<dbReference type="FunFam" id="3.30.1310.10:FF:000001">
    <property type="entry name" value="Nucleoid-associated protein YbaB"/>
    <property type="match status" value="1"/>
</dbReference>
<dbReference type="Gene3D" id="3.30.1310.10">
    <property type="entry name" value="Nucleoid-associated protein YbaB-like domain"/>
    <property type="match status" value="1"/>
</dbReference>
<dbReference type="HAMAP" id="MF_00274">
    <property type="entry name" value="DNA_YbaB_EbfC"/>
    <property type="match status" value="1"/>
</dbReference>
<dbReference type="InterPro" id="IPR036894">
    <property type="entry name" value="YbaB-like_sf"/>
</dbReference>
<dbReference type="InterPro" id="IPR004401">
    <property type="entry name" value="YbaB/EbfC"/>
</dbReference>
<dbReference type="NCBIfam" id="TIGR00103">
    <property type="entry name" value="DNA_YbaB_EbfC"/>
    <property type="match status" value="1"/>
</dbReference>
<dbReference type="PANTHER" id="PTHR33449">
    <property type="entry name" value="NUCLEOID-ASSOCIATED PROTEIN YBAB"/>
    <property type="match status" value="1"/>
</dbReference>
<dbReference type="PANTHER" id="PTHR33449:SF1">
    <property type="entry name" value="NUCLEOID-ASSOCIATED PROTEIN YBAB"/>
    <property type="match status" value="1"/>
</dbReference>
<dbReference type="Pfam" id="PF02575">
    <property type="entry name" value="YbaB_DNA_bd"/>
    <property type="match status" value="1"/>
</dbReference>
<dbReference type="PIRSF" id="PIRSF004555">
    <property type="entry name" value="UCP004555"/>
    <property type="match status" value="1"/>
</dbReference>
<dbReference type="SUPFAM" id="SSF82607">
    <property type="entry name" value="YbaB-like"/>
    <property type="match status" value="1"/>
</dbReference>
<evidence type="ECO:0000255" key="1">
    <source>
        <dbReference type="HAMAP-Rule" id="MF_00274"/>
    </source>
</evidence>
<evidence type="ECO:0000256" key="2">
    <source>
        <dbReference type="SAM" id="MobiDB-lite"/>
    </source>
</evidence>
<accession>Q63UU7</accession>
<protein>
    <recommendedName>
        <fullName evidence="1">Nucleoid-associated protein BPSL1499</fullName>
    </recommendedName>
</protein>
<name>Y1499_BURPS</name>
<comment type="function">
    <text evidence="1">Binds to DNA and alters its conformation. May be involved in regulation of gene expression, nucleoid organization and DNA protection.</text>
</comment>
<comment type="subunit">
    <text evidence="1">Homodimer.</text>
</comment>
<comment type="subcellular location">
    <subcellularLocation>
        <location evidence="1">Cytoplasm</location>
        <location evidence="1">Nucleoid</location>
    </subcellularLocation>
</comment>
<comment type="similarity">
    <text evidence="1">Belongs to the YbaB/EbfC family.</text>
</comment>
<proteinExistence type="inferred from homology"/>
<keyword id="KW-0963">Cytoplasm</keyword>
<keyword id="KW-0238">DNA-binding</keyword>
<keyword id="KW-1185">Reference proteome</keyword>
<gene>
    <name type="ordered locus">BPSL1499</name>
</gene>